<dbReference type="EC" id="7.1.2.2" evidence="1"/>
<dbReference type="EMBL" id="AE017283">
    <property type="protein sequence ID" value="AAT82988.1"/>
    <property type="molecule type" value="Genomic_DNA"/>
</dbReference>
<dbReference type="RefSeq" id="WP_011183821.1">
    <property type="nucleotide sequence ID" value="NC_006085.1"/>
</dbReference>
<dbReference type="SMR" id="Q6A8C7"/>
<dbReference type="EnsemblBacteria" id="AAT82988">
    <property type="protein sequence ID" value="AAT82988"/>
    <property type="gene ID" value="PPA1239"/>
</dbReference>
<dbReference type="KEGG" id="pac:PPA1239"/>
<dbReference type="PATRIC" id="fig|267747.3.peg.1276"/>
<dbReference type="eggNOG" id="COG0055">
    <property type="taxonomic scope" value="Bacteria"/>
</dbReference>
<dbReference type="HOGENOM" id="CLU_022398_0_2_11"/>
<dbReference type="Proteomes" id="UP000000603">
    <property type="component" value="Chromosome"/>
</dbReference>
<dbReference type="GO" id="GO:0005886">
    <property type="term" value="C:plasma membrane"/>
    <property type="evidence" value="ECO:0007669"/>
    <property type="project" value="UniProtKB-SubCell"/>
</dbReference>
<dbReference type="GO" id="GO:0045259">
    <property type="term" value="C:proton-transporting ATP synthase complex"/>
    <property type="evidence" value="ECO:0007669"/>
    <property type="project" value="UniProtKB-KW"/>
</dbReference>
<dbReference type="GO" id="GO:0005524">
    <property type="term" value="F:ATP binding"/>
    <property type="evidence" value="ECO:0007669"/>
    <property type="project" value="UniProtKB-UniRule"/>
</dbReference>
<dbReference type="GO" id="GO:0016887">
    <property type="term" value="F:ATP hydrolysis activity"/>
    <property type="evidence" value="ECO:0007669"/>
    <property type="project" value="InterPro"/>
</dbReference>
<dbReference type="GO" id="GO:0046933">
    <property type="term" value="F:proton-transporting ATP synthase activity, rotational mechanism"/>
    <property type="evidence" value="ECO:0007669"/>
    <property type="project" value="UniProtKB-UniRule"/>
</dbReference>
<dbReference type="CDD" id="cd18110">
    <property type="entry name" value="ATP-synt_F1_beta_C"/>
    <property type="match status" value="1"/>
</dbReference>
<dbReference type="CDD" id="cd18115">
    <property type="entry name" value="ATP-synt_F1_beta_N"/>
    <property type="match status" value="1"/>
</dbReference>
<dbReference type="CDD" id="cd01133">
    <property type="entry name" value="F1-ATPase_beta_CD"/>
    <property type="match status" value="1"/>
</dbReference>
<dbReference type="FunFam" id="1.10.1140.10:FF:000001">
    <property type="entry name" value="ATP synthase subunit beta"/>
    <property type="match status" value="1"/>
</dbReference>
<dbReference type="FunFam" id="2.40.10.170:FF:000005">
    <property type="entry name" value="ATP synthase subunit beta"/>
    <property type="match status" value="1"/>
</dbReference>
<dbReference type="FunFam" id="3.40.50.300:FF:000004">
    <property type="entry name" value="ATP synthase subunit beta"/>
    <property type="match status" value="1"/>
</dbReference>
<dbReference type="Gene3D" id="2.40.10.170">
    <property type="match status" value="1"/>
</dbReference>
<dbReference type="Gene3D" id="1.10.1140.10">
    <property type="entry name" value="Bovine Mitochondrial F1-atpase, Atp Synthase Beta Chain, Chain D, domain 3"/>
    <property type="match status" value="1"/>
</dbReference>
<dbReference type="Gene3D" id="3.40.50.300">
    <property type="entry name" value="P-loop containing nucleotide triphosphate hydrolases"/>
    <property type="match status" value="1"/>
</dbReference>
<dbReference type="HAMAP" id="MF_01347">
    <property type="entry name" value="ATP_synth_beta_bact"/>
    <property type="match status" value="1"/>
</dbReference>
<dbReference type="InterPro" id="IPR003593">
    <property type="entry name" value="AAA+_ATPase"/>
</dbReference>
<dbReference type="InterPro" id="IPR055190">
    <property type="entry name" value="ATP-synt_VA_C"/>
</dbReference>
<dbReference type="InterPro" id="IPR005722">
    <property type="entry name" value="ATP_synth_F1_bsu"/>
</dbReference>
<dbReference type="InterPro" id="IPR020003">
    <property type="entry name" value="ATPase_a/bsu_AS"/>
</dbReference>
<dbReference type="InterPro" id="IPR050053">
    <property type="entry name" value="ATPase_alpha/beta_chains"/>
</dbReference>
<dbReference type="InterPro" id="IPR004100">
    <property type="entry name" value="ATPase_F1/V1/A1_a/bsu_N"/>
</dbReference>
<dbReference type="InterPro" id="IPR036121">
    <property type="entry name" value="ATPase_F1/V1/A1_a/bsu_N_sf"/>
</dbReference>
<dbReference type="InterPro" id="IPR000194">
    <property type="entry name" value="ATPase_F1/V1/A1_a/bsu_nucl-bd"/>
</dbReference>
<dbReference type="InterPro" id="IPR024034">
    <property type="entry name" value="ATPase_F1/V1_b/a_C"/>
</dbReference>
<dbReference type="InterPro" id="IPR027417">
    <property type="entry name" value="P-loop_NTPase"/>
</dbReference>
<dbReference type="NCBIfam" id="TIGR01039">
    <property type="entry name" value="atpD"/>
    <property type="match status" value="1"/>
</dbReference>
<dbReference type="PANTHER" id="PTHR15184">
    <property type="entry name" value="ATP SYNTHASE"/>
    <property type="match status" value="1"/>
</dbReference>
<dbReference type="PANTHER" id="PTHR15184:SF71">
    <property type="entry name" value="ATP SYNTHASE SUBUNIT BETA, MITOCHONDRIAL"/>
    <property type="match status" value="1"/>
</dbReference>
<dbReference type="Pfam" id="PF00006">
    <property type="entry name" value="ATP-synt_ab"/>
    <property type="match status" value="1"/>
</dbReference>
<dbReference type="Pfam" id="PF02874">
    <property type="entry name" value="ATP-synt_ab_N"/>
    <property type="match status" value="1"/>
</dbReference>
<dbReference type="Pfam" id="PF22919">
    <property type="entry name" value="ATP-synt_VA_C"/>
    <property type="match status" value="1"/>
</dbReference>
<dbReference type="SMART" id="SM00382">
    <property type="entry name" value="AAA"/>
    <property type="match status" value="1"/>
</dbReference>
<dbReference type="SUPFAM" id="SSF47917">
    <property type="entry name" value="C-terminal domain of alpha and beta subunits of F1 ATP synthase"/>
    <property type="match status" value="1"/>
</dbReference>
<dbReference type="SUPFAM" id="SSF50615">
    <property type="entry name" value="N-terminal domain of alpha and beta subunits of F1 ATP synthase"/>
    <property type="match status" value="1"/>
</dbReference>
<dbReference type="SUPFAM" id="SSF52540">
    <property type="entry name" value="P-loop containing nucleoside triphosphate hydrolases"/>
    <property type="match status" value="1"/>
</dbReference>
<dbReference type="PROSITE" id="PS00152">
    <property type="entry name" value="ATPASE_ALPHA_BETA"/>
    <property type="match status" value="1"/>
</dbReference>
<accession>Q6A8C7</accession>
<sequence>MTATTITPETKDEVVGVGRVVRVIGPVVDVEFPAGQLPEILNALHVDAEVMGETHAITLEVALHIGENVVRAISLKPTDGMRRGTEVRDTGAPISVPVGDVTKGHVWNVTGDVLNADPSTIEVTERWPIHRDPPAFDDLEPETEMLETGIKVLDLLTPYVKGGKIGLFGGAGVGKTVLIQEMIYRIAHNFGGTSVFAGVGERTREGNDLINEMDEAGVLKDTALVFGQMDEPPGTRLRIALTGLTMAEYFRDVQNQDVLLFIDNIFRFSQAGSEVSTLLGRMPSAVGYQPNLADEMGQLQERITSTRGHSITSMQAVYVPADDYTDPAPATTFAHLDATTELSREIASRGLYPAVDPLTSTSRILDPLYVGQEHYDTATQVKQILQRNKELQDIIAILGVDELSEEDKVTVARARRIQQFLSQNTYTAEKFTGVAGSTVPIADTVEGFQMICRGDVDHIPEQAFFNVGSMDMVMENWDKMKKEG</sequence>
<protein>
    <recommendedName>
        <fullName evidence="1">ATP synthase subunit beta</fullName>
        <ecNumber evidence="1">7.1.2.2</ecNumber>
    </recommendedName>
    <alternativeName>
        <fullName evidence="1">ATP synthase F1 sector subunit beta</fullName>
    </alternativeName>
    <alternativeName>
        <fullName evidence="1">F-ATPase subunit beta</fullName>
    </alternativeName>
</protein>
<feature type="chain" id="PRO_0000254336" description="ATP synthase subunit beta">
    <location>
        <begin position="1"/>
        <end position="484"/>
    </location>
</feature>
<feature type="binding site" evidence="1">
    <location>
        <begin position="169"/>
        <end position="176"/>
    </location>
    <ligand>
        <name>ATP</name>
        <dbReference type="ChEBI" id="CHEBI:30616"/>
    </ligand>
</feature>
<organism>
    <name type="scientific">Cutibacterium acnes (strain DSM 16379 / KPA171202)</name>
    <name type="common">Propionibacterium acnes</name>
    <dbReference type="NCBI Taxonomy" id="267747"/>
    <lineage>
        <taxon>Bacteria</taxon>
        <taxon>Bacillati</taxon>
        <taxon>Actinomycetota</taxon>
        <taxon>Actinomycetes</taxon>
        <taxon>Propionibacteriales</taxon>
        <taxon>Propionibacteriaceae</taxon>
        <taxon>Cutibacterium</taxon>
    </lineage>
</organism>
<evidence type="ECO:0000255" key="1">
    <source>
        <dbReference type="HAMAP-Rule" id="MF_01347"/>
    </source>
</evidence>
<comment type="function">
    <text evidence="1">Produces ATP from ADP in the presence of a proton gradient across the membrane. The catalytic sites are hosted primarily by the beta subunits.</text>
</comment>
<comment type="catalytic activity">
    <reaction evidence="1">
        <text>ATP + H2O + 4 H(+)(in) = ADP + phosphate + 5 H(+)(out)</text>
        <dbReference type="Rhea" id="RHEA:57720"/>
        <dbReference type="ChEBI" id="CHEBI:15377"/>
        <dbReference type="ChEBI" id="CHEBI:15378"/>
        <dbReference type="ChEBI" id="CHEBI:30616"/>
        <dbReference type="ChEBI" id="CHEBI:43474"/>
        <dbReference type="ChEBI" id="CHEBI:456216"/>
        <dbReference type="EC" id="7.1.2.2"/>
    </reaction>
</comment>
<comment type="subunit">
    <text evidence="1">F-type ATPases have 2 components, CF(1) - the catalytic core - and CF(0) - the membrane proton channel. CF(1) has five subunits: alpha(3), beta(3), gamma(1), delta(1), epsilon(1). CF(0) has three main subunits: a(1), b(2) and c(9-12). The alpha and beta chains form an alternating ring which encloses part of the gamma chain. CF(1) is attached to CF(0) by a central stalk formed by the gamma and epsilon chains, while a peripheral stalk is formed by the delta and b chains.</text>
</comment>
<comment type="subcellular location">
    <subcellularLocation>
        <location evidence="1">Cell membrane</location>
        <topology evidence="1">Peripheral membrane protein</topology>
    </subcellularLocation>
</comment>
<comment type="similarity">
    <text evidence="1">Belongs to the ATPase alpha/beta chains family.</text>
</comment>
<gene>
    <name evidence="1" type="primary">atpD</name>
    <name type="ordered locus">PPA1239</name>
</gene>
<keyword id="KW-0066">ATP synthesis</keyword>
<keyword id="KW-0067">ATP-binding</keyword>
<keyword id="KW-1003">Cell membrane</keyword>
<keyword id="KW-0139">CF(1)</keyword>
<keyword id="KW-0375">Hydrogen ion transport</keyword>
<keyword id="KW-0406">Ion transport</keyword>
<keyword id="KW-0472">Membrane</keyword>
<keyword id="KW-0547">Nucleotide-binding</keyword>
<keyword id="KW-1278">Translocase</keyword>
<keyword id="KW-0813">Transport</keyword>
<proteinExistence type="inferred from homology"/>
<reference key="1">
    <citation type="journal article" date="2004" name="Science">
        <title>The complete genome sequence of Propionibacterium acnes, a commensal of human skin.</title>
        <authorList>
            <person name="Brueggemann H."/>
            <person name="Henne A."/>
            <person name="Hoster F."/>
            <person name="Liesegang H."/>
            <person name="Wiezer A."/>
            <person name="Strittmatter A."/>
            <person name="Hujer S."/>
            <person name="Duerre P."/>
            <person name="Gottschalk G."/>
        </authorList>
    </citation>
    <scope>NUCLEOTIDE SEQUENCE [LARGE SCALE GENOMIC DNA]</scope>
    <source>
        <strain>DSM 16379 / KPA171202</strain>
    </source>
</reference>
<name>ATPB_CUTAK</name>